<reference key="1">
    <citation type="journal article" date="2004" name="Proc. Natl. Acad. Sci. U.S.A.">
        <title>Insights into the evolution of Yersinia pestis through whole-genome comparison with Yersinia pseudotuberculosis.</title>
        <authorList>
            <person name="Chain P.S.G."/>
            <person name="Carniel E."/>
            <person name="Larimer F.W."/>
            <person name="Lamerdin J."/>
            <person name="Stoutland P.O."/>
            <person name="Regala W.M."/>
            <person name="Georgescu A.M."/>
            <person name="Vergez L.M."/>
            <person name="Land M.L."/>
            <person name="Motin V.L."/>
            <person name="Brubaker R.R."/>
            <person name="Fowler J."/>
            <person name="Hinnebusch J."/>
            <person name="Marceau M."/>
            <person name="Medigue C."/>
            <person name="Simonet M."/>
            <person name="Chenal-Francisque V."/>
            <person name="Souza B."/>
            <person name="Dacheux D."/>
            <person name="Elliott J.M."/>
            <person name="Derbise A."/>
            <person name="Hauser L.J."/>
            <person name="Garcia E."/>
        </authorList>
    </citation>
    <scope>NUCLEOTIDE SEQUENCE [LARGE SCALE GENOMIC DNA]</scope>
    <source>
        <strain>IP32953</strain>
    </source>
</reference>
<comment type="function">
    <text evidence="1">GTPase that plays an essential role in the late steps of ribosome biogenesis.</text>
</comment>
<comment type="subunit">
    <text evidence="1">Associates with the 50S ribosomal subunit.</text>
</comment>
<comment type="similarity">
    <text evidence="1">Belongs to the TRAFAC class TrmE-Era-EngA-EngB-Septin-like GTPase superfamily. EngA (Der) GTPase family.</text>
</comment>
<sequence>MIPVIALVGRPNVGKSTLFNRLTHTRDALVADFPGLTRDRKYGRAEVEGHEFIVVDTGGIDGTEDGVETKMAGQSLLAIEEADIVLFMVDARAGLMPADQGIAQHLRSREKATFLVANKTDGIDPDTATADFYSLGLGEVHAIAASHGRGVTQLIEDVMAPYMDAEEPEVELTDEEENAAYWAEQEAQGEDVPPEDPEDDFDPRTLPIKLAIVGRPNVGKSTLTNRILGEDRVVVYDMPGTTRDSIYIPMTRDDREYILIDTAGVRKRGKITETVEKFSVIKTLQAIEDSNVVLLVIDARDGISDQDLSLLGFILNSGRSLVIAVNKWDGMTEEARAQVKDMLDLRLGFVDFARIHFISALHGSGVGNLFESVQEAYDCSTKRVGTSLLTRIMQMAEEDHQPPLVRGRRVKLKYAHAGGYNPPIVVIHGNQVTDLSDSYKRYLMNYFRRSLKVMGTPIRIQFKEGENPFAGKRNPLTPNQMRKRKRLMSHLKKGK</sequence>
<accession>Q668A3</accession>
<gene>
    <name evidence="1" type="primary">der</name>
    <name type="synonym">engA</name>
    <name type="ordered locus">YPTB2837</name>
</gene>
<evidence type="ECO:0000255" key="1">
    <source>
        <dbReference type="HAMAP-Rule" id="MF_00195"/>
    </source>
</evidence>
<keyword id="KW-0342">GTP-binding</keyword>
<keyword id="KW-0547">Nucleotide-binding</keyword>
<keyword id="KW-0677">Repeat</keyword>
<keyword id="KW-0690">Ribosome biogenesis</keyword>
<protein>
    <recommendedName>
        <fullName evidence="1">GTPase Der</fullName>
    </recommendedName>
    <alternativeName>
        <fullName evidence="1">GTP-binding protein EngA</fullName>
    </alternativeName>
</protein>
<name>DER_YERPS</name>
<organism>
    <name type="scientific">Yersinia pseudotuberculosis serotype I (strain IP32953)</name>
    <dbReference type="NCBI Taxonomy" id="273123"/>
    <lineage>
        <taxon>Bacteria</taxon>
        <taxon>Pseudomonadati</taxon>
        <taxon>Pseudomonadota</taxon>
        <taxon>Gammaproteobacteria</taxon>
        <taxon>Enterobacterales</taxon>
        <taxon>Yersiniaceae</taxon>
        <taxon>Yersinia</taxon>
    </lineage>
</organism>
<proteinExistence type="inferred from homology"/>
<feature type="chain" id="PRO_1000011789" description="GTPase Der">
    <location>
        <begin position="1"/>
        <end position="495"/>
    </location>
</feature>
<feature type="domain" description="EngA-type G 1">
    <location>
        <begin position="3"/>
        <end position="166"/>
    </location>
</feature>
<feature type="domain" description="EngA-type G 2">
    <location>
        <begin position="208"/>
        <end position="381"/>
    </location>
</feature>
<feature type="domain" description="KH-like" evidence="1">
    <location>
        <begin position="382"/>
        <end position="466"/>
    </location>
</feature>
<feature type="binding site" evidence="1">
    <location>
        <begin position="9"/>
        <end position="16"/>
    </location>
    <ligand>
        <name>GTP</name>
        <dbReference type="ChEBI" id="CHEBI:37565"/>
        <label>1</label>
    </ligand>
</feature>
<feature type="binding site" evidence="1">
    <location>
        <begin position="56"/>
        <end position="60"/>
    </location>
    <ligand>
        <name>GTP</name>
        <dbReference type="ChEBI" id="CHEBI:37565"/>
        <label>1</label>
    </ligand>
</feature>
<feature type="binding site" evidence="1">
    <location>
        <begin position="118"/>
        <end position="121"/>
    </location>
    <ligand>
        <name>GTP</name>
        <dbReference type="ChEBI" id="CHEBI:37565"/>
        <label>1</label>
    </ligand>
</feature>
<feature type="binding site" evidence="1">
    <location>
        <begin position="214"/>
        <end position="221"/>
    </location>
    <ligand>
        <name>GTP</name>
        <dbReference type="ChEBI" id="CHEBI:37565"/>
        <label>2</label>
    </ligand>
</feature>
<feature type="binding site" evidence="1">
    <location>
        <begin position="261"/>
        <end position="265"/>
    </location>
    <ligand>
        <name>GTP</name>
        <dbReference type="ChEBI" id="CHEBI:37565"/>
        <label>2</label>
    </ligand>
</feature>
<feature type="binding site" evidence="1">
    <location>
        <begin position="326"/>
        <end position="329"/>
    </location>
    <ligand>
        <name>GTP</name>
        <dbReference type="ChEBI" id="CHEBI:37565"/>
        <label>2</label>
    </ligand>
</feature>
<dbReference type="EMBL" id="BX936398">
    <property type="protein sequence ID" value="CAH22075.1"/>
    <property type="molecule type" value="Genomic_DNA"/>
</dbReference>
<dbReference type="RefSeq" id="WP_011192800.1">
    <property type="nucleotide sequence ID" value="NC_006155.1"/>
</dbReference>
<dbReference type="SMR" id="Q668A3"/>
<dbReference type="KEGG" id="ypo:BZ17_3793"/>
<dbReference type="KEGG" id="yps:YPTB2837"/>
<dbReference type="PATRIC" id="fig|273123.14.peg.3979"/>
<dbReference type="Proteomes" id="UP000001011">
    <property type="component" value="Chromosome"/>
</dbReference>
<dbReference type="GO" id="GO:0005525">
    <property type="term" value="F:GTP binding"/>
    <property type="evidence" value="ECO:0007669"/>
    <property type="project" value="UniProtKB-UniRule"/>
</dbReference>
<dbReference type="GO" id="GO:0043022">
    <property type="term" value="F:ribosome binding"/>
    <property type="evidence" value="ECO:0007669"/>
    <property type="project" value="TreeGrafter"/>
</dbReference>
<dbReference type="GO" id="GO:0042254">
    <property type="term" value="P:ribosome biogenesis"/>
    <property type="evidence" value="ECO:0007669"/>
    <property type="project" value="UniProtKB-KW"/>
</dbReference>
<dbReference type="CDD" id="cd01894">
    <property type="entry name" value="EngA1"/>
    <property type="match status" value="1"/>
</dbReference>
<dbReference type="CDD" id="cd01895">
    <property type="entry name" value="EngA2"/>
    <property type="match status" value="1"/>
</dbReference>
<dbReference type="FunFam" id="3.30.300.20:FF:000004">
    <property type="entry name" value="GTPase Der"/>
    <property type="match status" value="1"/>
</dbReference>
<dbReference type="FunFam" id="3.40.50.300:FF:000040">
    <property type="entry name" value="GTPase Der"/>
    <property type="match status" value="1"/>
</dbReference>
<dbReference type="FunFam" id="3.40.50.300:FF:000057">
    <property type="entry name" value="GTPase Der"/>
    <property type="match status" value="1"/>
</dbReference>
<dbReference type="Gene3D" id="3.30.300.20">
    <property type="match status" value="1"/>
</dbReference>
<dbReference type="Gene3D" id="3.40.50.300">
    <property type="entry name" value="P-loop containing nucleotide triphosphate hydrolases"/>
    <property type="match status" value="2"/>
</dbReference>
<dbReference type="HAMAP" id="MF_00195">
    <property type="entry name" value="GTPase_Der"/>
    <property type="match status" value="1"/>
</dbReference>
<dbReference type="InterPro" id="IPR031166">
    <property type="entry name" value="G_ENGA"/>
</dbReference>
<dbReference type="InterPro" id="IPR006073">
    <property type="entry name" value="GTP-bd"/>
</dbReference>
<dbReference type="InterPro" id="IPR016484">
    <property type="entry name" value="GTPase_Der"/>
</dbReference>
<dbReference type="InterPro" id="IPR032859">
    <property type="entry name" value="KH_dom-like"/>
</dbReference>
<dbReference type="InterPro" id="IPR015946">
    <property type="entry name" value="KH_dom-like_a/b"/>
</dbReference>
<dbReference type="InterPro" id="IPR027417">
    <property type="entry name" value="P-loop_NTPase"/>
</dbReference>
<dbReference type="InterPro" id="IPR005225">
    <property type="entry name" value="Small_GTP-bd"/>
</dbReference>
<dbReference type="NCBIfam" id="TIGR03594">
    <property type="entry name" value="GTPase_EngA"/>
    <property type="match status" value="1"/>
</dbReference>
<dbReference type="NCBIfam" id="TIGR00231">
    <property type="entry name" value="small_GTP"/>
    <property type="match status" value="2"/>
</dbReference>
<dbReference type="PANTHER" id="PTHR43834">
    <property type="entry name" value="GTPASE DER"/>
    <property type="match status" value="1"/>
</dbReference>
<dbReference type="PANTHER" id="PTHR43834:SF6">
    <property type="entry name" value="GTPASE DER"/>
    <property type="match status" value="1"/>
</dbReference>
<dbReference type="Pfam" id="PF14714">
    <property type="entry name" value="KH_dom-like"/>
    <property type="match status" value="1"/>
</dbReference>
<dbReference type="Pfam" id="PF01926">
    <property type="entry name" value="MMR_HSR1"/>
    <property type="match status" value="2"/>
</dbReference>
<dbReference type="PIRSF" id="PIRSF006485">
    <property type="entry name" value="GTP-binding_EngA"/>
    <property type="match status" value="1"/>
</dbReference>
<dbReference type="PRINTS" id="PR00326">
    <property type="entry name" value="GTP1OBG"/>
</dbReference>
<dbReference type="SUPFAM" id="SSF52540">
    <property type="entry name" value="P-loop containing nucleoside triphosphate hydrolases"/>
    <property type="match status" value="2"/>
</dbReference>
<dbReference type="PROSITE" id="PS51712">
    <property type="entry name" value="G_ENGA"/>
    <property type="match status" value="2"/>
</dbReference>